<organism>
    <name type="scientific">Dugong dugon</name>
    <name type="common">Dugong</name>
    <name type="synonym">Trichechus dugon</name>
    <dbReference type="NCBI Taxonomy" id="29137"/>
    <lineage>
        <taxon>Eukaryota</taxon>
        <taxon>Metazoa</taxon>
        <taxon>Chordata</taxon>
        <taxon>Craniata</taxon>
        <taxon>Vertebrata</taxon>
        <taxon>Euteleostomi</taxon>
        <taxon>Mammalia</taxon>
        <taxon>Eutheria</taxon>
        <taxon>Afrotheria</taxon>
        <taxon>Sirenia</taxon>
        <taxon>Dugongidae</taxon>
        <taxon>Dugong</taxon>
    </lineage>
</organism>
<protein>
    <recommendedName>
        <fullName>NADH-ubiquinone oxidoreductase chain 5</fullName>
        <ecNumber>7.1.1.2</ecNumber>
    </recommendedName>
    <alternativeName>
        <fullName>NADH dehydrogenase subunit 5</fullName>
    </alternativeName>
</protein>
<evidence type="ECO:0000250" key="1"/>
<evidence type="ECO:0000255" key="2"/>
<evidence type="ECO:0000305" key="3"/>
<feature type="chain" id="PRO_0000118092" description="NADH-ubiquinone oxidoreductase chain 5">
    <location>
        <begin position="1"/>
        <end position="603"/>
    </location>
</feature>
<feature type="transmembrane region" description="Helical" evidence="2">
    <location>
        <begin position="4"/>
        <end position="24"/>
    </location>
</feature>
<feature type="transmembrane region" description="Helical" evidence="2">
    <location>
        <begin position="38"/>
        <end position="58"/>
    </location>
</feature>
<feature type="transmembrane region" description="Helical" evidence="2">
    <location>
        <begin position="87"/>
        <end position="107"/>
    </location>
</feature>
<feature type="transmembrane region" description="Helical" evidence="2">
    <location>
        <begin position="117"/>
        <end position="137"/>
    </location>
</feature>
<feature type="transmembrane region" description="Helical" evidence="2">
    <location>
        <begin position="140"/>
        <end position="160"/>
    </location>
</feature>
<feature type="transmembrane region" description="Helical" evidence="2">
    <location>
        <begin position="171"/>
        <end position="191"/>
    </location>
</feature>
<feature type="transmembrane region" description="Helical" evidence="2">
    <location>
        <begin position="211"/>
        <end position="233"/>
    </location>
</feature>
<feature type="transmembrane region" description="Helical" evidence="2">
    <location>
        <begin position="241"/>
        <end position="261"/>
    </location>
</feature>
<feature type="transmembrane region" description="Helical" evidence="2">
    <location>
        <begin position="273"/>
        <end position="293"/>
    </location>
</feature>
<feature type="transmembrane region" description="Helical" evidence="2">
    <location>
        <begin position="301"/>
        <end position="320"/>
    </location>
</feature>
<feature type="transmembrane region" description="Helical" evidence="2">
    <location>
        <begin position="331"/>
        <end position="351"/>
    </location>
</feature>
<feature type="transmembrane region" description="Helical" evidence="2">
    <location>
        <begin position="366"/>
        <end position="386"/>
    </location>
</feature>
<feature type="transmembrane region" description="Helical" evidence="2">
    <location>
        <begin position="409"/>
        <end position="429"/>
    </location>
</feature>
<feature type="transmembrane region" description="Helical" evidence="2">
    <location>
        <begin position="457"/>
        <end position="477"/>
    </location>
</feature>
<feature type="transmembrane region" description="Helical" evidence="2">
    <location>
        <begin position="488"/>
        <end position="508"/>
    </location>
</feature>
<feature type="transmembrane region" description="Helical" evidence="2">
    <location>
        <begin position="583"/>
        <end position="603"/>
    </location>
</feature>
<keyword id="KW-0249">Electron transport</keyword>
<keyword id="KW-0472">Membrane</keyword>
<keyword id="KW-0496">Mitochondrion</keyword>
<keyword id="KW-0999">Mitochondrion inner membrane</keyword>
<keyword id="KW-0520">NAD</keyword>
<keyword id="KW-0679">Respiratory chain</keyword>
<keyword id="KW-1278">Translocase</keyword>
<keyword id="KW-0812">Transmembrane</keyword>
<keyword id="KW-1133">Transmembrane helix</keyword>
<keyword id="KW-0813">Transport</keyword>
<keyword id="KW-0830">Ubiquinone</keyword>
<reference key="1">
    <citation type="journal article" date="2002" name="Proc. Natl. Acad. Sci. U.S.A.">
        <title>Mammalian mitogenomic relationships and the root of the eutherian tree.</title>
        <authorList>
            <person name="Arnason U."/>
            <person name="Adegoke J.A."/>
            <person name="Bodin K."/>
            <person name="Born E.W."/>
            <person name="Esa Y.B."/>
            <person name="Gullberg A."/>
            <person name="Nilsson M."/>
            <person name="Short R.V."/>
            <person name="Xu X."/>
            <person name="Janke A."/>
        </authorList>
    </citation>
    <scope>NUCLEOTIDE SEQUENCE [GENOMIC DNA]</scope>
</reference>
<sequence length="603" mass="67596">MNMLPTLTLISLIILTSPIMLSPLRIHETRNFPHYVKMAVSYAFMVSMVPAMIFMHSGHEAVISNWHWMTIHTLKLSLSFKLDYFSLIFMPVALFVTWSIMEFSLWYMNSDPYINRFFKYLLLFLITMIILITANNLFQLFIGWEGVGIMSFLLIGWWYGRTDANTAALQAMIYNRIGDVGFVAAMAWFLLHSNSWELQQIFLTVPKGNTLPLTGLLLAAMGKSAQFGLHPWLPSAMEGPTPVSALLHSSTMVVAGVFLLIRFHPLMEMNPSILTLTLCVGAITTLFTAICALTQNDIKKIIAFSTSSQLGLMMVTIGINQPHLAFLHICTHAFFKAMLFMCSGSIIHSLGDEQDIRKMGGLYKTLPFTTTALIIGSLALTGMPFLTGFYSKDLIIEAMSSSYTNAWALLITFIATSMTAVYSTRIIFFTLLGQPRYPTLIQINENNPLLTNAIKRLMLGSIFAGFLISSNLPPTTVPPMTMPHHLKFMALAVTLLGFALAIELSSFTYHLKFDYPSHTYKFSNMLGYYPTIIHRSPPHYLLNTSQNLTSTIMDLAWLEKSIPKSLALMQKSASTTISNQKGMIKLYFLSFLISLTLGLLLII</sequence>
<proteinExistence type="inferred from homology"/>
<name>NU5M_DUGDU</name>
<accession>Q8W9M6</accession>
<dbReference type="EC" id="7.1.1.2"/>
<dbReference type="EMBL" id="AJ421723">
    <property type="protein sequence ID" value="CAD18918.1"/>
    <property type="molecule type" value="Genomic_DNA"/>
</dbReference>
<dbReference type="RefSeq" id="NP_536768.1">
    <property type="nucleotide sequence ID" value="NC_003314.1"/>
</dbReference>
<dbReference type="SMR" id="Q8W9M6"/>
<dbReference type="GeneID" id="804491"/>
<dbReference type="CTD" id="4540"/>
<dbReference type="GO" id="GO:0005743">
    <property type="term" value="C:mitochondrial inner membrane"/>
    <property type="evidence" value="ECO:0007669"/>
    <property type="project" value="UniProtKB-SubCell"/>
</dbReference>
<dbReference type="GO" id="GO:0008137">
    <property type="term" value="F:NADH dehydrogenase (ubiquinone) activity"/>
    <property type="evidence" value="ECO:0007669"/>
    <property type="project" value="UniProtKB-EC"/>
</dbReference>
<dbReference type="GO" id="GO:0042773">
    <property type="term" value="P:ATP synthesis coupled electron transport"/>
    <property type="evidence" value="ECO:0007669"/>
    <property type="project" value="InterPro"/>
</dbReference>
<dbReference type="GO" id="GO:0015990">
    <property type="term" value="P:electron transport coupled proton transport"/>
    <property type="evidence" value="ECO:0007669"/>
    <property type="project" value="TreeGrafter"/>
</dbReference>
<dbReference type="InterPro" id="IPR010934">
    <property type="entry name" value="NADH_DH_su5_C"/>
</dbReference>
<dbReference type="InterPro" id="IPR018393">
    <property type="entry name" value="NADHpl_OxRdtase_5_subgr"/>
</dbReference>
<dbReference type="InterPro" id="IPR001750">
    <property type="entry name" value="ND/Mrp_TM"/>
</dbReference>
<dbReference type="InterPro" id="IPR003945">
    <property type="entry name" value="NU5C-like"/>
</dbReference>
<dbReference type="InterPro" id="IPR001516">
    <property type="entry name" value="Proton_antipo_N"/>
</dbReference>
<dbReference type="NCBIfam" id="TIGR01974">
    <property type="entry name" value="NDH_I_L"/>
    <property type="match status" value="1"/>
</dbReference>
<dbReference type="PANTHER" id="PTHR42829">
    <property type="entry name" value="NADH-UBIQUINONE OXIDOREDUCTASE CHAIN 5"/>
    <property type="match status" value="1"/>
</dbReference>
<dbReference type="PANTHER" id="PTHR42829:SF2">
    <property type="entry name" value="NADH-UBIQUINONE OXIDOREDUCTASE CHAIN 5"/>
    <property type="match status" value="1"/>
</dbReference>
<dbReference type="Pfam" id="PF06455">
    <property type="entry name" value="NADH5_C"/>
    <property type="match status" value="1"/>
</dbReference>
<dbReference type="Pfam" id="PF00361">
    <property type="entry name" value="Proton_antipo_M"/>
    <property type="match status" value="1"/>
</dbReference>
<dbReference type="Pfam" id="PF00662">
    <property type="entry name" value="Proton_antipo_N"/>
    <property type="match status" value="1"/>
</dbReference>
<dbReference type="PRINTS" id="PR01434">
    <property type="entry name" value="NADHDHGNASE5"/>
</dbReference>
<comment type="function">
    <text evidence="1">Core subunit of the mitochondrial membrane respiratory chain NADH dehydrogenase (Complex I) that is believed to belong to the minimal assembly required for catalysis. Complex I functions in the transfer of electrons from NADH to the respiratory chain. The immediate electron acceptor for the enzyme is believed to be ubiquinone (By similarity).</text>
</comment>
<comment type="catalytic activity">
    <reaction>
        <text>a ubiquinone + NADH + 5 H(+)(in) = a ubiquinol + NAD(+) + 4 H(+)(out)</text>
        <dbReference type="Rhea" id="RHEA:29091"/>
        <dbReference type="Rhea" id="RHEA-COMP:9565"/>
        <dbReference type="Rhea" id="RHEA-COMP:9566"/>
        <dbReference type="ChEBI" id="CHEBI:15378"/>
        <dbReference type="ChEBI" id="CHEBI:16389"/>
        <dbReference type="ChEBI" id="CHEBI:17976"/>
        <dbReference type="ChEBI" id="CHEBI:57540"/>
        <dbReference type="ChEBI" id="CHEBI:57945"/>
        <dbReference type="EC" id="7.1.1.2"/>
    </reaction>
</comment>
<comment type="subcellular location">
    <subcellularLocation>
        <location evidence="1">Mitochondrion inner membrane</location>
        <topology evidence="1">Multi-pass membrane protein</topology>
    </subcellularLocation>
</comment>
<comment type="similarity">
    <text evidence="3">Belongs to the complex I subunit 5 family.</text>
</comment>
<geneLocation type="mitochondrion"/>
<gene>
    <name type="primary">MT-ND5</name>
    <name type="synonym">MTND5</name>
    <name type="synonym">NADH5</name>
    <name type="synonym">ND5</name>
</gene>